<reference key="1">
    <citation type="journal article" date="2007" name="Nat. Biotechnol.">
        <title>Genome sequence and identification of candidate vaccine antigens from the animal pathogen Dichelobacter nodosus.</title>
        <authorList>
            <person name="Myers G.S.A."/>
            <person name="Parker D."/>
            <person name="Al-Hasani K."/>
            <person name="Kennan R.M."/>
            <person name="Seemann T."/>
            <person name="Ren Q."/>
            <person name="Badger J.H."/>
            <person name="Selengut J.D."/>
            <person name="Deboy R.T."/>
            <person name="Tettelin H."/>
            <person name="Boyce J.D."/>
            <person name="McCarl V.P."/>
            <person name="Han X."/>
            <person name="Nelson W.C."/>
            <person name="Madupu R."/>
            <person name="Mohamoud Y."/>
            <person name="Holley T."/>
            <person name="Fedorova N."/>
            <person name="Khouri H."/>
            <person name="Bottomley S.P."/>
            <person name="Whittington R.J."/>
            <person name="Adler B."/>
            <person name="Songer J.G."/>
            <person name="Rood J.I."/>
            <person name="Paulsen I.T."/>
        </authorList>
    </citation>
    <scope>NUCLEOTIDE SEQUENCE [LARGE SCALE GENOMIC DNA]</scope>
    <source>
        <strain>VCS1703A</strain>
    </source>
</reference>
<accession>A5EX82</accession>
<comment type="function">
    <text evidence="1">One of the primary rRNA binding proteins, it binds directly near the 3'-end of the 23S rRNA, where it nucleates assembly of the 50S subunit.</text>
</comment>
<comment type="subunit">
    <text evidence="1">Part of the 50S ribosomal subunit. Forms a cluster with proteins L14 and L19.</text>
</comment>
<comment type="PTM">
    <text evidence="1">Methylated by PrmB.</text>
</comment>
<comment type="similarity">
    <text evidence="1">Belongs to the universal ribosomal protein uL3 family.</text>
</comment>
<protein>
    <recommendedName>
        <fullName evidence="1">Large ribosomal subunit protein uL3</fullName>
    </recommendedName>
    <alternativeName>
        <fullName evidence="3">50S ribosomal protein L3</fullName>
    </alternativeName>
</protein>
<gene>
    <name evidence="1" type="primary">rplC</name>
    <name type="ordered locus">DNO_1275</name>
</gene>
<keyword id="KW-0488">Methylation</keyword>
<keyword id="KW-1185">Reference proteome</keyword>
<keyword id="KW-0687">Ribonucleoprotein</keyword>
<keyword id="KW-0689">Ribosomal protein</keyword>
<keyword id="KW-0694">RNA-binding</keyword>
<keyword id="KW-0699">rRNA-binding</keyword>
<evidence type="ECO:0000255" key="1">
    <source>
        <dbReference type="HAMAP-Rule" id="MF_01325"/>
    </source>
</evidence>
<evidence type="ECO:0000256" key="2">
    <source>
        <dbReference type="SAM" id="MobiDB-lite"/>
    </source>
</evidence>
<evidence type="ECO:0000305" key="3"/>
<dbReference type="EMBL" id="CP000513">
    <property type="protein sequence ID" value="ABQ13704.1"/>
    <property type="molecule type" value="Genomic_DNA"/>
</dbReference>
<dbReference type="RefSeq" id="WP_012031570.1">
    <property type="nucleotide sequence ID" value="NC_009446.1"/>
</dbReference>
<dbReference type="SMR" id="A5EX82"/>
<dbReference type="STRING" id="246195.DNO_1275"/>
<dbReference type="KEGG" id="dno:DNO_1275"/>
<dbReference type="eggNOG" id="COG0087">
    <property type="taxonomic scope" value="Bacteria"/>
</dbReference>
<dbReference type="HOGENOM" id="CLU_044142_4_1_6"/>
<dbReference type="OrthoDB" id="9806135at2"/>
<dbReference type="Proteomes" id="UP000000248">
    <property type="component" value="Chromosome"/>
</dbReference>
<dbReference type="GO" id="GO:0022625">
    <property type="term" value="C:cytosolic large ribosomal subunit"/>
    <property type="evidence" value="ECO:0007669"/>
    <property type="project" value="TreeGrafter"/>
</dbReference>
<dbReference type="GO" id="GO:0019843">
    <property type="term" value="F:rRNA binding"/>
    <property type="evidence" value="ECO:0007669"/>
    <property type="project" value="UniProtKB-UniRule"/>
</dbReference>
<dbReference type="GO" id="GO:0003735">
    <property type="term" value="F:structural constituent of ribosome"/>
    <property type="evidence" value="ECO:0007669"/>
    <property type="project" value="InterPro"/>
</dbReference>
<dbReference type="GO" id="GO:0006412">
    <property type="term" value="P:translation"/>
    <property type="evidence" value="ECO:0007669"/>
    <property type="project" value="UniProtKB-UniRule"/>
</dbReference>
<dbReference type="FunFam" id="2.40.30.10:FF:000004">
    <property type="entry name" value="50S ribosomal protein L3"/>
    <property type="match status" value="1"/>
</dbReference>
<dbReference type="FunFam" id="3.30.160.810:FF:000001">
    <property type="entry name" value="50S ribosomal protein L3"/>
    <property type="match status" value="1"/>
</dbReference>
<dbReference type="Gene3D" id="3.30.160.810">
    <property type="match status" value="1"/>
</dbReference>
<dbReference type="Gene3D" id="2.40.30.10">
    <property type="entry name" value="Translation factors"/>
    <property type="match status" value="1"/>
</dbReference>
<dbReference type="HAMAP" id="MF_01325_B">
    <property type="entry name" value="Ribosomal_uL3_B"/>
    <property type="match status" value="1"/>
</dbReference>
<dbReference type="InterPro" id="IPR000597">
    <property type="entry name" value="Ribosomal_uL3"/>
</dbReference>
<dbReference type="InterPro" id="IPR019927">
    <property type="entry name" value="Ribosomal_uL3_bac/org-type"/>
</dbReference>
<dbReference type="InterPro" id="IPR019926">
    <property type="entry name" value="Ribosomal_uL3_CS"/>
</dbReference>
<dbReference type="InterPro" id="IPR009000">
    <property type="entry name" value="Transl_B-barrel_sf"/>
</dbReference>
<dbReference type="NCBIfam" id="TIGR03625">
    <property type="entry name" value="L3_bact"/>
    <property type="match status" value="1"/>
</dbReference>
<dbReference type="PANTHER" id="PTHR11229">
    <property type="entry name" value="50S RIBOSOMAL PROTEIN L3"/>
    <property type="match status" value="1"/>
</dbReference>
<dbReference type="PANTHER" id="PTHR11229:SF16">
    <property type="entry name" value="LARGE RIBOSOMAL SUBUNIT PROTEIN UL3C"/>
    <property type="match status" value="1"/>
</dbReference>
<dbReference type="Pfam" id="PF00297">
    <property type="entry name" value="Ribosomal_L3"/>
    <property type="match status" value="1"/>
</dbReference>
<dbReference type="SUPFAM" id="SSF50447">
    <property type="entry name" value="Translation proteins"/>
    <property type="match status" value="1"/>
</dbReference>
<dbReference type="PROSITE" id="PS00474">
    <property type="entry name" value="RIBOSOMAL_L3"/>
    <property type="match status" value="1"/>
</dbReference>
<sequence>MTMGLVGQKVGMTRIFDEEGTASAVTVIEIQPNIISQIKTDETDGYHAVQVSVGHRKSSRTTKALAGHFAKANISAAALVKEFRVDSEEIAKYEVGKPVELAIFEQGQRVDVRARSIGKGYAGTIKRHNFRGQRKTHGNSVSHRVPGSIGQNQTPGRVFKGKKMSGHMGNKMCSVQNIEIARIDVERNLLLLKGSVPGAKGGYVVIRPSVKA</sequence>
<organism>
    <name type="scientific">Dichelobacter nodosus (strain VCS1703A)</name>
    <dbReference type="NCBI Taxonomy" id="246195"/>
    <lineage>
        <taxon>Bacteria</taxon>
        <taxon>Pseudomonadati</taxon>
        <taxon>Pseudomonadota</taxon>
        <taxon>Gammaproteobacteria</taxon>
        <taxon>Cardiobacteriales</taxon>
        <taxon>Cardiobacteriaceae</taxon>
        <taxon>Dichelobacter</taxon>
    </lineage>
</organism>
<name>RL3_DICNV</name>
<feature type="chain" id="PRO_1000052042" description="Large ribosomal subunit protein uL3">
    <location>
        <begin position="1"/>
        <end position="212"/>
    </location>
</feature>
<feature type="region of interest" description="Disordered" evidence="2">
    <location>
        <begin position="134"/>
        <end position="154"/>
    </location>
</feature>
<feature type="modified residue" description="N5-methylglutamine" evidence="1">
    <location>
        <position position="153"/>
    </location>
</feature>
<proteinExistence type="inferred from homology"/>